<comment type="function">
    <text evidence="2">Component of the ubiquinol-cytochrome c reductase complex (complex III or cytochrome b-c1 complex) that is part of the mitochondrial respiratory chain. The b-c1 complex mediates electron transfer from ubiquinol to cytochrome c. Contributes to the generation of a proton gradient across the mitochondrial membrane that is then used for ATP synthesis.</text>
</comment>
<comment type="cofactor">
    <cofactor evidence="2">
        <name>heme b</name>
        <dbReference type="ChEBI" id="CHEBI:60344"/>
    </cofactor>
    <text evidence="2">Binds 2 heme b groups non-covalently.</text>
</comment>
<comment type="subunit">
    <text evidence="2">The cytochrome bc1 complex contains 3 respiratory subunits (MT-CYB, CYC1 and UQCRFS1), 2 core proteins (UQCRC1 and UQCRC2) and probably 6 low-molecular weight proteins.</text>
</comment>
<comment type="subcellular location">
    <subcellularLocation>
        <location evidence="2">Mitochondrion inner membrane</location>
        <topology evidence="2">Multi-pass membrane protein</topology>
    </subcellularLocation>
</comment>
<comment type="miscellaneous">
    <text evidence="1">Heme 1 (or BL or b562) is low-potential and absorbs at about 562 nm, and heme 2 (or BH or b566) is high-potential and absorbs at about 566 nm.</text>
</comment>
<comment type="similarity">
    <text evidence="3 4">Belongs to the cytochrome b family.</text>
</comment>
<comment type="caution">
    <text evidence="2">The full-length protein contains only eight transmembrane helices, not nine as predicted by bioinformatics tools.</text>
</comment>
<feature type="chain" id="PRO_0000060924" description="Cytochrome b">
    <location>
        <begin position="1"/>
        <end position="370"/>
    </location>
</feature>
<feature type="transmembrane region" description="Helical" evidence="2">
    <location>
        <begin position="25"/>
        <end position="45"/>
    </location>
</feature>
<feature type="transmembrane region" description="Helical" evidence="2">
    <location>
        <begin position="69"/>
        <end position="90"/>
    </location>
</feature>
<feature type="transmembrane region" description="Helical" evidence="2">
    <location>
        <begin position="105"/>
        <end position="125"/>
    </location>
</feature>
<feature type="transmembrane region" description="Helical" evidence="2">
    <location>
        <begin position="170"/>
        <end position="190"/>
    </location>
</feature>
<feature type="transmembrane region" description="Helical" evidence="2">
    <location>
        <begin position="218"/>
        <end position="238"/>
    </location>
</feature>
<feature type="transmembrane region" description="Helical" evidence="2">
    <location>
        <begin position="280"/>
        <end position="300"/>
    </location>
</feature>
<feature type="transmembrane region" description="Helical" evidence="2">
    <location>
        <begin position="312"/>
        <end position="332"/>
    </location>
</feature>
<feature type="transmembrane region" description="Helical" evidence="2">
    <location>
        <begin position="339"/>
        <end position="358"/>
    </location>
</feature>
<feature type="binding site" description="axial binding residue" evidence="2">
    <location>
        <position position="75"/>
    </location>
    <ligand>
        <name>heme b</name>
        <dbReference type="ChEBI" id="CHEBI:60344"/>
        <label>b562</label>
    </ligand>
    <ligandPart>
        <name>Fe</name>
        <dbReference type="ChEBI" id="CHEBI:18248"/>
    </ligandPart>
</feature>
<feature type="binding site" description="axial binding residue" evidence="2">
    <location>
        <position position="89"/>
    </location>
    <ligand>
        <name>heme b</name>
        <dbReference type="ChEBI" id="CHEBI:60344"/>
        <label>b566</label>
    </ligand>
    <ligandPart>
        <name>Fe</name>
        <dbReference type="ChEBI" id="CHEBI:18248"/>
    </ligandPart>
</feature>
<feature type="binding site" description="axial binding residue" evidence="2">
    <location>
        <position position="174"/>
    </location>
    <ligand>
        <name>heme b</name>
        <dbReference type="ChEBI" id="CHEBI:60344"/>
        <label>b562</label>
    </ligand>
    <ligandPart>
        <name>Fe</name>
        <dbReference type="ChEBI" id="CHEBI:18248"/>
    </ligandPart>
</feature>
<feature type="binding site" description="axial binding residue" evidence="2">
    <location>
        <position position="188"/>
    </location>
    <ligand>
        <name>heme b</name>
        <dbReference type="ChEBI" id="CHEBI:60344"/>
        <label>b566</label>
    </ligand>
    <ligandPart>
        <name>Fe</name>
        <dbReference type="ChEBI" id="CHEBI:18248"/>
    </ligandPart>
</feature>
<feature type="binding site" evidence="2">
    <location>
        <position position="193"/>
    </location>
    <ligand>
        <name>a ubiquinone</name>
        <dbReference type="ChEBI" id="CHEBI:16389"/>
    </ligand>
</feature>
<dbReference type="EMBL" id="U69782">
    <property type="protein sequence ID" value="AAC01823.1"/>
    <property type="molecule type" value="Genomic_DNA"/>
</dbReference>
<dbReference type="GO" id="GO:0005743">
    <property type="term" value="C:mitochondrial inner membrane"/>
    <property type="evidence" value="ECO:0007669"/>
    <property type="project" value="UniProtKB-SubCell"/>
</dbReference>
<dbReference type="GO" id="GO:0045275">
    <property type="term" value="C:respiratory chain complex III"/>
    <property type="evidence" value="ECO:0007669"/>
    <property type="project" value="InterPro"/>
</dbReference>
<dbReference type="GO" id="GO:0046872">
    <property type="term" value="F:metal ion binding"/>
    <property type="evidence" value="ECO:0007669"/>
    <property type="project" value="UniProtKB-KW"/>
</dbReference>
<dbReference type="GO" id="GO:0008121">
    <property type="term" value="F:ubiquinol-cytochrome-c reductase activity"/>
    <property type="evidence" value="ECO:0007669"/>
    <property type="project" value="InterPro"/>
</dbReference>
<dbReference type="GO" id="GO:0006122">
    <property type="term" value="P:mitochondrial electron transport, ubiquinol to cytochrome c"/>
    <property type="evidence" value="ECO:0007669"/>
    <property type="project" value="TreeGrafter"/>
</dbReference>
<dbReference type="CDD" id="cd00290">
    <property type="entry name" value="cytochrome_b_C"/>
    <property type="match status" value="1"/>
</dbReference>
<dbReference type="CDD" id="cd00284">
    <property type="entry name" value="Cytochrome_b_N"/>
    <property type="match status" value="1"/>
</dbReference>
<dbReference type="Gene3D" id="1.20.810.10">
    <property type="entry name" value="Cytochrome Bc1 Complex, Chain C"/>
    <property type="match status" value="1"/>
</dbReference>
<dbReference type="InterPro" id="IPR005798">
    <property type="entry name" value="Cyt_b/b6_C"/>
</dbReference>
<dbReference type="InterPro" id="IPR036150">
    <property type="entry name" value="Cyt_b/b6_C_sf"/>
</dbReference>
<dbReference type="InterPro" id="IPR005797">
    <property type="entry name" value="Cyt_b/b6_N"/>
</dbReference>
<dbReference type="InterPro" id="IPR027387">
    <property type="entry name" value="Cytb/b6-like_sf"/>
</dbReference>
<dbReference type="InterPro" id="IPR030689">
    <property type="entry name" value="Cytochrome_b"/>
</dbReference>
<dbReference type="InterPro" id="IPR048260">
    <property type="entry name" value="Cytochrome_b_C_euk/bac"/>
</dbReference>
<dbReference type="InterPro" id="IPR048259">
    <property type="entry name" value="Cytochrome_b_N_euk/bac"/>
</dbReference>
<dbReference type="InterPro" id="IPR016174">
    <property type="entry name" value="Di-haem_cyt_TM"/>
</dbReference>
<dbReference type="PANTHER" id="PTHR19271">
    <property type="entry name" value="CYTOCHROME B"/>
    <property type="match status" value="1"/>
</dbReference>
<dbReference type="PANTHER" id="PTHR19271:SF16">
    <property type="entry name" value="CYTOCHROME B"/>
    <property type="match status" value="1"/>
</dbReference>
<dbReference type="Pfam" id="PF00032">
    <property type="entry name" value="Cytochrom_B_C"/>
    <property type="match status" value="1"/>
</dbReference>
<dbReference type="Pfam" id="PF00033">
    <property type="entry name" value="Cytochrome_B"/>
    <property type="match status" value="1"/>
</dbReference>
<dbReference type="PIRSF" id="PIRSF038885">
    <property type="entry name" value="COB"/>
    <property type="match status" value="1"/>
</dbReference>
<dbReference type="SUPFAM" id="SSF81648">
    <property type="entry name" value="a domain/subunit of cytochrome bc1 complex (Ubiquinol-cytochrome c reductase)"/>
    <property type="match status" value="1"/>
</dbReference>
<dbReference type="SUPFAM" id="SSF81342">
    <property type="entry name" value="Transmembrane di-heme cytochromes"/>
    <property type="match status" value="1"/>
</dbReference>
<dbReference type="PROSITE" id="PS51003">
    <property type="entry name" value="CYTB_CTER"/>
    <property type="match status" value="1"/>
</dbReference>
<dbReference type="PROSITE" id="PS51002">
    <property type="entry name" value="CYTB_NTER"/>
    <property type="match status" value="1"/>
</dbReference>
<reference key="1">
    <citation type="thesis" date="1997" institute="Queen's University / Kingston" country="Canada">
        <title>Hic Sunt Serpentes -- molecular phylogenetics and the Boidae (Serpentes: Booidea).</title>
        <authorList>
            <person name="Campbell B.N."/>
        </authorList>
    </citation>
    <scope>NUCLEOTIDE SEQUENCE [GENOMIC DNA]</scope>
</reference>
<sequence length="370" mass="42179">MPHQQILMLFGLLPVATNISTWWNFGSMLLACLTLQLLTGFFLAVHYTANINLAFSSIIHITRDVPYGWMMQNLHAIGASMFFICIYIHIARGLYYGSYLNKETWLSGTTLLIMLMATAFFGYVLPWGQMSFWAATVITNLLTAIPYLGSTMTTWLWGGFAINDPTLTRFFALHFILPFGIISLSSLHILLLHEEGSSNPLGTNSDIDKIPFHPYQTYKDMLMLTIMTIMLLTIVSFFPDIFNDPDNFSKANPLVTPQHIKPEWYFLFAYGILRSIPNKLGGALALXMSIMILLTLPFTHTSKLRSMMFRPFMQLTFWTFTATFLVISWTATKPVEPPFTTISQVAALMYFLFFISNPIMGWLENKIMKL</sequence>
<accession>O48047</accession>
<geneLocation type="mitochondrion"/>
<keyword id="KW-0249">Electron transport</keyword>
<keyword id="KW-0349">Heme</keyword>
<keyword id="KW-0408">Iron</keyword>
<keyword id="KW-0472">Membrane</keyword>
<keyword id="KW-0479">Metal-binding</keyword>
<keyword id="KW-0496">Mitochondrion</keyword>
<keyword id="KW-0999">Mitochondrion inner membrane</keyword>
<keyword id="KW-0679">Respiratory chain</keyword>
<keyword id="KW-0812">Transmembrane</keyword>
<keyword id="KW-1133">Transmembrane helix</keyword>
<keyword id="KW-0813">Transport</keyword>
<keyword id="KW-0830">Ubiquinone</keyword>
<evidence type="ECO:0000250" key="1"/>
<evidence type="ECO:0000250" key="2">
    <source>
        <dbReference type="UniProtKB" id="P00157"/>
    </source>
</evidence>
<evidence type="ECO:0000255" key="3">
    <source>
        <dbReference type="PROSITE-ProRule" id="PRU00967"/>
    </source>
</evidence>
<evidence type="ECO:0000255" key="4">
    <source>
        <dbReference type="PROSITE-ProRule" id="PRU00968"/>
    </source>
</evidence>
<name>CYB_CHIEX</name>
<protein>
    <recommendedName>
        <fullName>Cytochrome b</fullName>
    </recommendedName>
    <alternativeName>
        <fullName>Complex III subunit 3</fullName>
    </alternativeName>
    <alternativeName>
        <fullName>Complex III subunit III</fullName>
    </alternativeName>
    <alternativeName>
        <fullName>Cytochrome b-c1 complex subunit 3</fullName>
    </alternativeName>
    <alternativeName>
        <fullName>Ubiquinol-cytochrome-c reductase complex cytochrome b subunit</fullName>
    </alternativeName>
</protein>
<proteinExistence type="inferred from homology"/>
<organism>
    <name type="scientific">Chilabothrus exsul</name>
    <name type="common">Abaco Island boa</name>
    <name type="synonym">Epicrates exsul</name>
    <dbReference type="NCBI Taxonomy" id="51745"/>
    <lineage>
        <taxon>Eukaryota</taxon>
        <taxon>Metazoa</taxon>
        <taxon>Chordata</taxon>
        <taxon>Craniata</taxon>
        <taxon>Vertebrata</taxon>
        <taxon>Euteleostomi</taxon>
        <taxon>Lepidosauria</taxon>
        <taxon>Squamata</taxon>
        <taxon>Bifurcata</taxon>
        <taxon>Unidentata</taxon>
        <taxon>Episquamata</taxon>
        <taxon>Toxicofera</taxon>
        <taxon>Serpentes</taxon>
        <taxon>Henophidia</taxon>
        <taxon>Boidae</taxon>
        <taxon>Boinae</taxon>
        <taxon>Chilabothrus</taxon>
    </lineage>
</organism>
<gene>
    <name type="primary">MT-CYB</name>
    <name type="synonym">COB</name>
    <name type="synonym">CYTB</name>
    <name type="synonym">MTCYB</name>
</gene>